<gene>
    <name type="primary">MET</name>
</gene>
<name>MET_CALJA</name>
<proteinExistence type="inferred from homology"/>
<evidence type="ECO:0000250" key="1"/>
<evidence type="ECO:0000250" key="2">
    <source>
        <dbReference type="UniProtKB" id="P08581"/>
    </source>
</evidence>
<evidence type="ECO:0000250" key="3">
    <source>
        <dbReference type="UniProtKB" id="P16056"/>
    </source>
</evidence>
<evidence type="ECO:0000255" key="4"/>
<evidence type="ECO:0000255" key="5">
    <source>
        <dbReference type="PROSITE-ProRule" id="PRU00159"/>
    </source>
</evidence>
<evidence type="ECO:0000255" key="6">
    <source>
        <dbReference type="PROSITE-ProRule" id="PRU00352"/>
    </source>
</evidence>
<evidence type="ECO:0000255" key="7">
    <source>
        <dbReference type="PROSITE-ProRule" id="PRU10028"/>
    </source>
</evidence>
<protein>
    <recommendedName>
        <fullName>Hepatocyte growth factor receptor</fullName>
        <shortName>HGF receptor</shortName>
        <ecNumber>2.7.10.1</ecNumber>
    </recommendedName>
    <alternativeName>
        <fullName>HGF/SF receptor</fullName>
    </alternativeName>
    <alternativeName>
        <fullName>Proto-oncogene c-Met</fullName>
    </alternativeName>
    <alternativeName>
        <fullName>Scatter factor receptor</fullName>
        <shortName>SF receptor</shortName>
    </alternativeName>
    <alternativeName>
        <fullName>Tyrosine-protein kinase Met</fullName>
    </alternativeName>
</protein>
<accession>Q2QLG5</accession>
<comment type="function">
    <text evidence="1">Receptor tyrosine kinase that transduces signals from the extracellular matrix into the cytoplasm by binding to hepatocyte growth factor/HGF ligand. Regulates many physiological processes including proliferation, scattering, morphogenesis and survival. Ligand binding at the cell surface induces autophosphorylation of MET on its intracellular domain that provides docking sites for downstream signaling molecules. Following activation by ligand, interacts with the PI3-kinase subunit PIK3R1, PLCG1, SRC, GRB2, STAT3 or the adapter GAB1. Recruitment of these downstream effectors by MET leads to the activation of several signaling cascades including the RAS-ERK, PI3 kinase-AKT, or PLCgamma-PKC. The RAS-ERK activation is associated with the morphogenetic effects while PI3K/AKT coordinates prosurvival effects. During embryonic development, MET signaling plays a role in gastrulation, development and migration of muscles and neuronal precursors, angiogenesis and kidney formation. In adults, participates in wound healing as well as organ regeneration and tissue remodeling. Also promotes differentiation and proliferation of hematopoietic cells (By similarity).</text>
</comment>
<comment type="catalytic activity">
    <reaction evidence="7">
        <text>L-tyrosyl-[protein] + ATP = O-phospho-L-tyrosyl-[protein] + ADP + H(+)</text>
        <dbReference type="Rhea" id="RHEA:10596"/>
        <dbReference type="Rhea" id="RHEA-COMP:10136"/>
        <dbReference type="Rhea" id="RHEA-COMP:20101"/>
        <dbReference type="ChEBI" id="CHEBI:15378"/>
        <dbReference type="ChEBI" id="CHEBI:30616"/>
        <dbReference type="ChEBI" id="CHEBI:46858"/>
        <dbReference type="ChEBI" id="CHEBI:61978"/>
        <dbReference type="ChEBI" id="CHEBI:456216"/>
        <dbReference type="EC" id="2.7.10.1"/>
    </reaction>
</comment>
<comment type="subunit">
    <text evidence="2 3">Heterodimer made of an alpha chain (50 kDa) and a beta chain (145 kDa) which are disulfide linked. Binds PLXNB1. Interacts when phosphorylated with downstream effectors including STAT3, PIK3R1, SRC, PCLG1, GRB2 and GAB1. Interacts with SPSB1, SPSB2 and SPSB4. Interacts with INPP5D/SHIP1. When phosphorylated at Tyr-1356, interacts with INPPL1/SHIP2. Interacts with RANBP9 and RANBP10, as well as SPSB1, SPSB2, SPSB3 and SPSB4. SPSB1 binding occurs in the presence and in the absence of HGF, however HGF treatment has a positive effect on this interaction. Interacts with MUC20; prevents interaction with GRB2 and suppresses hepatocyte growth factor-induced cell proliferation. Interacts with GRB10. Interacts with PTPN1 and PTPN2. Interacts with HSP90AA1 and HSP90AB1; the interaction suppresses MET kinase activity. Interacts with tensin TNS3 (By similarity). Interacts (when phosphorylated) with tensin TNS4 (via SH2 domain); the interaction increases MET protein stability by inhibiting MET endocytosis and subsequent lysosomal degradation (By similarity).</text>
</comment>
<comment type="subcellular location">
    <subcellularLocation>
        <location evidence="1">Membrane</location>
        <topology evidence="1">Single-pass type I membrane protein</topology>
    </subcellularLocation>
</comment>
<comment type="domain">
    <text evidence="1">The kinase domain is involved in SPSB1 binding.</text>
</comment>
<comment type="domain">
    <text evidence="1">The beta-propeller Sema domain mediates binding to HGF.</text>
</comment>
<comment type="PTM">
    <text evidence="2">Autophosphorylated in response to ligand binding on Tyr-1234 and Tyr-1235 in the kinase domain leading to further phosphorylation of Tyr-1349 and Tyr-1356 in the C-terminal multifunctional docking site. Dephosphorylated by PTPRJ at Tyr-1349 and Tyr-1365. Dephosphorylated by PTPN1 and PTPN2 (By similarity).</text>
</comment>
<comment type="PTM">
    <text evidence="2">Ubiquitinated. Ubiquitination by CBL regulates the receptor stability and activity through proteasomal degradation (By similarity).</text>
</comment>
<comment type="PTM">
    <text evidence="2">O-mannosylation of IPT/TIG domains by TMEM260 is required for protein maturation. O-mannosylated residues are composed of single mannose glycans that are not elongated or modified.</text>
</comment>
<comment type="similarity">
    <text evidence="5">Belongs to the protein kinase superfamily. Tyr protein kinase family.</text>
</comment>
<feature type="signal peptide" evidence="4">
    <location>
        <begin position="1"/>
        <end position="24"/>
    </location>
</feature>
<feature type="chain" id="PRO_0000226361" description="Hepatocyte growth factor receptor" evidence="1">
    <location>
        <begin position="25"/>
        <end position="1381"/>
    </location>
</feature>
<feature type="topological domain" description="Extracellular" evidence="4">
    <location>
        <begin position="25"/>
        <end position="934"/>
    </location>
</feature>
<feature type="transmembrane region" description="Helical" evidence="4">
    <location>
        <begin position="935"/>
        <end position="955"/>
    </location>
</feature>
<feature type="topological domain" description="Cytoplasmic" evidence="4">
    <location>
        <begin position="956"/>
        <end position="1381"/>
    </location>
</feature>
<feature type="domain" description="Sema" evidence="6">
    <location>
        <begin position="27"/>
        <end position="515"/>
    </location>
</feature>
<feature type="domain" description="IPT/TIG 1">
    <location>
        <begin position="563"/>
        <end position="655"/>
    </location>
</feature>
<feature type="domain" description="IPT/TIG 2">
    <location>
        <begin position="657"/>
        <end position="739"/>
    </location>
</feature>
<feature type="domain" description="IPT/TIG 3">
    <location>
        <begin position="742"/>
        <end position="836"/>
    </location>
</feature>
<feature type="domain" description="Protein kinase" evidence="5">
    <location>
        <begin position="1078"/>
        <end position="1345"/>
    </location>
</feature>
<feature type="region of interest" description="Interaction with RANBP9" evidence="1">
    <location>
        <begin position="1212"/>
        <end position="1381"/>
    </location>
</feature>
<feature type="region of interest" description="Interaction with MUC20" evidence="1">
    <location>
        <begin position="1320"/>
        <end position="1359"/>
    </location>
</feature>
<feature type="active site" description="Proton acceptor" evidence="5 7">
    <location>
        <position position="1204"/>
    </location>
</feature>
<feature type="binding site" evidence="5">
    <location>
        <begin position="1084"/>
        <end position="1092"/>
    </location>
    <ligand>
        <name>ATP</name>
        <dbReference type="ChEBI" id="CHEBI:30616"/>
    </ligand>
</feature>
<feature type="binding site" evidence="5">
    <location>
        <position position="1110"/>
    </location>
    <ligand>
        <name>ATP</name>
        <dbReference type="ChEBI" id="CHEBI:30616"/>
    </ligand>
</feature>
<feature type="site" description="Cleavage" evidence="4">
    <location>
        <begin position="307"/>
        <end position="308"/>
    </location>
</feature>
<feature type="modified residue" description="Phosphoserine" evidence="2">
    <location>
        <position position="966"/>
    </location>
</feature>
<feature type="modified residue" description="Phosphothreonine" evidence="2">
    <location>
        <position position="977"/>
    </location>
</feature>
<feature type="modified residue" description="Phosphoserine" evidence="2">
    <location>
        <position position="990"/>
    </location>
</feature>
<feature type="modified residue" description="Phosphoserine" evidence="2">
    <location>
        <position position="997"/>
    </location>
</feature>
<feature type="modified residue" description="Phosphoserine" evidence="2">
    <location>
        <position position="1000"/>
    </location>
</feature>
<feature type="modified residue" description="Phosphotyrosine" evidence="2">
    <location>
        <position position="1003"/>
    </location>
</feature>
<feature type="modified residue" description="Phosphotyrosine" evidence="2">
    <location>
        <position position="1230"/>
    </location>
</feature>
<feature type="modified residue" description="Phosphotyrosine; by autocatalysis" evidence="2">
    <location>
        <position position="1234"/>
    </location>
</feature>
<feature type="modified residue" description="Phosphotyrosine; by autocatalysis" evidence="2">
    <location>
        <position position="1235"/>
    </location>
</feature>
<feature type="modified residue" description="Phosphothreonine" evidence="2">
    <location>
        <position position="1289"/>
    </location>
</feature>
<feature type="modified residue" description="Phosphotyrosine; by autocatalysis" evidence="2">
    <location>
        <position position="1349"/>
    </location>
</feature>
<feature type="modified residue" description="Phosphotyrosine; by autocatalysis" evidence="2">
    <location>
        <position position="1356"/>
    </location>
</feature>
<feature type="modified residue" description="Phosphotyrosine" evidence="2">
    <location>
        <position position="1365"/>
    </location>
</feature>
<feature type="glycosylation site" description="N-linked (GlcNAc...) asparagine" evidence="4">
    <location>
        <position position="45"/>
    </location>
</feature>
<feature type="glycosylation site" description="N-linked (GlcNAc...) asparagine" evidence="4">
    <location>
        <position position="106"/>
    </location>
</feature>
<feature type="glycosylation site" description="N-linked (GlcNAc...) asparagine" evidence="4">
    <location>
        <position position="149"/>
    </location>
</feature>
<feature type="glycosylation site" description="N-linked (GlcNAc...) asparagine" evidence="4">
    <location>
        <position position="202"/>
    </location>
</feature>
<feature type="glycosylation site" description="N-linked (GlcNAc...) asparagine" evidence="4">
    <location>
        <position position="399"/>
    </location>
</feature>
<feature type="glycosylation site" description="O-linked (Man) threonine" evidence="2">
    <location>
        <position position="582"/>
    </location>
</feature>
<feature type="glycosylation site" description="N-linked (GlcNAc...) asparagine" evidence="4">
    <location>
        <position position="607"/>
    </location>
</feature>
<feature type="glycosylation site" description="N-linked (GlcNAc...) asparagine" evidence="4">
    <location>
        <position position="635"/>
    </location>
</feature>
<feature type="glycosylation site" description="O-linked (Man) threonine" evidence="2">
    <location>
        <position position="676"/>
    </location>
</feature>
<feature type="glycosylation site" description="O-linked (Man) threonine" evidence="2">
    <location>
        <position position="761"/>
    </location>
</feature>
<feature type="glycosylation site" description="N-linked (GlcNAc...) asparagine" evidence="4">
    <location>
        <position position="785"/>
    </location>
</feature>
<feature type="glycosylation site" description="N-linked (GlcNAc...) asparagine" evidence="4">
    <location>
        <position position="879"/>
    </location>
</feature>
<feature type="glycosylation site" description="N-linked (GlcNAc...) asparagine" evidence="4">
    <location>
        <position position="930"/>
    </location>
</feature>
<feature type="disulfide bond" evidence="6">
    <location>
        <begin position="95"/>
        <end position="101"/>
    </location>
</feature>
<feature type="disulfide bond" evidence="6">
    <location>
        <begin position="98"/>
        <end position="160"/>
    </location>
</feature>
<feature type="disulfide bond" evidence="6">
    <location>
        <begin position="133"/>
        <end position="141"/>
    </location>
</feature>
<feature type="disulfide bond" evidence="6">
    <location>
        <begin position="172"/>
        <end position="175"/>
    </location>
</feature>
<feature type="disulfide bond" evidence="6">
    <location>
        <begin position="298"/>
        <end position="363"/>
    </location>
</feature>
<feature type="disulfide bond" evidence="6">
    <location>
        <begin position="385"/>
        <end position="397"/>
    </location>
</feature>
<feature type="disulfide bond" evidence="6">
    <location>
        <begin position="520"/>
        <end position="538"/>
    </location>
</feature>
<feature type="disulfide bond" evidence="6">
    <location>
        <begin position="526"/>
        <end position="561"/>
    </location>
</feature>
<feature type="disulfide bond" evidence="6">
    <location>
        <begin position="529"/>
        <end position="545"/>
    </location>
</feature>
<feature type="disulfide bond" evidence="6">
    <location>
        <begin position="541"/>
        <end position="551"/>
    </location>
</feature>
<organism>
    <name type="scientific">Callithrix jacchus</name>
    <name type="common">White-tufted-ear marmoset</name>
    <dbReference type="NCBI Taxonomy" id="9483"/>
    <lineage>
        <taxon>Eukaryota</taxon>
        <taxon>Metazoa</taxon>
        <taxon>Chordata</taxon>
        <taxon>Craniata</taxon>
        <taxon>Vertebrata</taxon>
        <taxon>Euteleostomi</taxon>
        <taxon>Mammalia</taxon>
        <taxon>Eutheria</taxon>
        <taxon>Euarchontoglires</taxon>
        <taxon>Primates</taxon>
        <taxon>Haplorrhini</taxon>
        <taxon>Platyrrhini</taxon>
        <taxon>Cebidae</taxon>
        <taxon>Callitrichinae</taxon>
        <taxon>Callithrix</taxon>
        <taxon>Callithrix</taxon>
    </lineage>
</organism>
<dbReference type="EC" id="2.7.10.1"/>
<dbReference type="EMBL" id="DP000014">
    <property type="protein sequence ID" value="ABA90391.1"/>
    <property type="molecule type" value="Genomic_DNA"/>
</dbReference>
<dbReference type="SMR" id="Q2QLG5"/>
<dbReference type="FunCoup" id="Q2QLG5">
    <property type="interactions" value="995"/>
</dbReference>
<dbReference type="STRING" id="9483.ENSCJAP00000009442"/>
<dbReference type="GlyCosmos" id="Q2QLG5">
    <property type="glycosylation" value="10 sites, No reported glycans"/>
</dbReference>
<dbReference type="eggNOG" id="KOG1095">
    <property type="taxonomic scope" value="Eukaryota"/>
</dbReference>
<dbReference type="eggNOG" id="KOG3610">
    <property type="taxonomic scope" value="Eukaryota"/>
</dbReference>
<dbReference type="HOGENOM" id="CLU_005158_0_0_1"/>
<dbReference type="InParanoid" id="Q2QLG5"/>
<dbReference type="Proteomes" id="UP000008225">
    <property type="component" value="Unplaced"/>
</dbReference>
<dbReference type="GO" id="GO:0005886">
    <property type="term" value="C:plasma membrane"/>
    <property type="evidence" value="ECO:0007669"/>
    <property type="project" value="TreeGrafter"/>
</dbReference>
<dbReference type="GO" id="GO:0002116">
    <property type="term" value="C:semaphorin receptor complex"/>
    <property type="evidence" value="ECO:0007669"/>
    <property type="project" value="TreeGrafter"/>
</dbReference>
<dbReference type="GO" id="GO:0005524">
    <property type="term" value="F:ATP binding"/>
    <property type="evidence" value="ECO:0007669"/>
    <property type="project" value="UniProtKB-KW"/>
</dbReference>
<dbReference type="GO" id="GO:0017154">
    <property type="term" value="F:semaphorin receptor activity"/>
    <property type="evidence" value="ECO:0007669"/>
    <property type="project" value="InterPro"/>
</dbReference>
<dbReference type="GO" id="GO:0004714">
    <property type="term" value="F:transmembrane receptor protein tyrosine kinase activity"/>
    <property type="evidence" value="ECO:0007669"/>
    <property type="project" value="UniProtKB-EC"/>
</dbReference>
<dbReference type="GO" id="GO:0007169">
    <property type="term" value="P:cell surface receptor protein tyrosine kinase signaling pathway"/>
    <property type="evidence" value="ECO:0007669"/>
    <property type="project" value="InterPro"/>
</dbReference>
<dbReference type="GO" id="GO:0050918">
    <property type="term" value="P:positive chemotaxis"/>
    <property type="evidence" value="ECO:0000250"/>
    <property type="project" value="UniProtKB"/>
</dbReference>
<dbReference type="GO" id="GO:2001028">
    <property type="term" value="P:positive regulation of endothelial cell chemotaxis"/>
    <property type="evidence" value="ECO:0000250"/>
    <property type="project" value="UniProtKB"/>
</dbReference>
<dbReference type="GO" id="GO:0071526">
    <property type="term" value="P:semaphorin-plexin signaling pathway"/>
    <property type="evidence" value="ECO:0000250"/>
    <property type="project" value="UniProtKB"/>
</dbReference>
<dbReference type="CDD" id="cd00603">
    <property type="entry name" value="IPT_PCSR"/>
    <property type="match status" value="1"/>
</dbReference>
<dbReference type="CDD" id="cd01180">
    <property type="entry name" value="IPT_plexin_repeat1"/>
    <property type="match status" value="1"/>
</dbReference>
<dbReference type="CDD" id="cd01179">
    <property type="entry name" value="IPT_plexin_repeat2"/>
    <property type="match status" value="1"/>
</dbReference>
<dbReference type="CDD" id="cd05058">
    <property type="entry name" value="PTKc_Met_Ron"/>
    <property type="match status" value="1"/>
</dbReference>
<dbReference type="FunFam" id="1.10.510.10:FF:000093">
    <property type="entry name" value="Hepatocyte growth factor receptor"/>
    <property type="match status" value="1"/>
</dbReference>
<dbReference type="FunFam" id="2.130.10.10:FF:000088">
    <property type="entry name" value="Hepatocyte growth factor receptor"/>
    <property type="match status" value="1"/>
</dbReference>
<dbReference type="FunFam" id="2.60.40.10:FF:000213">
    <property type="entry name" value="Hepatocyte growth factor receptor"/>
    <property type="match status" value="1"/>
</dbReference>
<dbReference type="FunFam" id="2.60.40.10:FF:000400">
    <property type="entry name" value="Hepatocyte growth factor receptor"/>
    <property type="match status" value="1"/>
</dbReference>
<dbReference type="FunFam" id="2.60.40.10:FF:002708">
    <property type="entry name" value="Hepatocyte growth factor receptor"/>
    <property type="match status" value="1"/>
</dbReference>
<dbReference type="FunFam" id="3.30.200.20:FF:000188">
    <property type="entry name" value="Hepatocyte growth factor receptor"/>
    <property type="match status" value="1"/>
</dbReference>
<dbReference type="Gene3D" id="2.60.40.10">
    <property type="entry name" value="Immunoglobulins"/>
    <property type="match status" value="3"/>
</dbReference>
<dbReference type="Gene3D" id="3.30.200.20">
    <property type="entry name" value="Phosphorylase Kinase, domain 1"/>
    <property type="match status" value="1"/>
</dbReference>
<dbReference type="Gene3D" id="1.10.510.10">
    <property type="entry name" value="Transferase(Phosphotransferase) domain 1"/>
    <property type="match status" value="1"/>
</dbReference>
<dbReference type="Gene3D" id="2.130.10.10">
    <property type="entry name" value="YVTN repeat-like/Quinoprotein amine dehydrogenase"/>
    <property type="match status" value="1"/>
</dbReference>
<dbReference type="InterPro" id="IPR013783">
    <property type="entry name" value="Ig-like_fold"/>
</dbReference>
<dbReference type="InterPro" id="IPR014756">
    <property type="entry name" value="Ig_E-set"/>
</dbReference>
<dbReference type="InterPro" id="IPR002909">
    <property type="entry name" value="IPT_dom"/>
</dbReference>
<dbReference type="InterPro" id="IPR011009">
    <property type="entry name" value="Kinase-like_dom_sf"/>
</dbReference>
<dbReference type="InterPro" id="IPR031148">
    <property type="entry name" value="Plexin"/>
</dbReference>
<dbReference type="InterPro" id="IPR002165">
    <property type="entry name" value="Plexin_repeat"/>
</dbReference>
<dbReference type="InterPro" id="IPR000719">
    <property type="entry name" value="Prot_kinase_dom"/>
</dbReference>
<dbReference type="InterPro" id="IPR017441">
    <property type="entry name" value="Protein_kinase_ATP_BS"/>
</dbReference>
<dbReference type="InterPro" id="IPR016201">
    <property type="entry name" value="PSI"/>
</dbReference>
<dbReference type="InterPro" id="IPR001627">
    <property type="entry name" value="Semap_dom"/>
</dbReference>
<dbReference type="InterPro" id="IPR036352">
    <property type="entry name" value="Semap_dom_sf"/>
</dbReference>
<dbReference type="InterPro" id="IPR001245">
    <property type="entry name" value="Ser-Thr/Tyr_kinase_cat_dom"/>
</dbReference>
<dbReference type="InterPro" id="IPR008266">
    <property type="entry name" value="Tyr_kinase_AS"/>
</dbReference>
<dbReference type="InterPro" id="IPR020635">
    <property type="entry name" value="Tyr_kinase_cat_dom"/>
</dbReference>
<dbReference type="InterPro" id="IPR016244">
    <property type="entry name" value="Tyr_kinase_HGF/MSP_rcpt"/>
</dbReference>
<dbReference type="InterPro" id="IPR015943">
    <property type="entry name" value="WD40/YVTN_repeat-like_dom_sf"/>
</dbReference>
<dbReference type="PANTHER" id="PTHR22625:SF61">
    <property type="entry name" value="HEPATOCYTE GROWTH FACTOR RECEPTOR"/>
    <property type="match status" value="1"/>
</dbReference>
<dbReference type="PANTHER" id="PTHR22625">
    <property type="entry name" value="PLEXIN"/>
    <property type="match status" value="1"/>
</dbReference>
<dbReference type="Pfam" id="PF07714">
    <property type="entry name" value="PK_Tyr_Ser-Thr"/>
    <property type="match status" value="1"/>
</dbReference>
<dbReference type="Pfam" id="PF01437">
    <property type="entry name" value="PSI"/>
    <property type="match status" value="1"/>
</dbReference>
<dbReference type="Pfam" id="PF01403">
    <property type="entry name" value="Sema"/>
    <property type="match status" value="1"/>
</dbReference>
<dbReference type="Pfam" id="PF01833">
    <property type="entry name" value="TIG"/>
    <property type="match status" value="3"/>
</dbReference>
<dbReference type="PIRSF" id="PIRSF000617">
    <property type="entry name" value="TyrPK_HGF-R"/>
    <property type="match status" value="1"/>
</dbReference>
<dbReference type="PRINTS" id="PR00109">
    <property type="entry name" value="TYRKINASE"/>
</dbReference>
<dbReference type="SMART" id="SM00429">
    <property type="entry name" value="IPT"/>
    <property type="match status" value="4"/>
</dbReference>
<dbReference type="SMART" id="SM00423">
    <property type="entry name" value="PSI"/>
    <property type="match status" value="1"/>
</dbReference>
<dbReference type="SMART" id="SM00630">
    <property type="entry name" value="Sema"/>
    <property type="match status" value="1"/>
</dbReference>
<dbReference type="SMART" id="SM00219">
    <property type="entry name" value="TyrKc"/>
    <property type="match status" value="1"/>
</dbReference>
<dbReference type="SUPFAM" id="SSF81296">
    <property type="entry name" value="E set domains"/>
    <property type="match status" value="3"/>
</dbReference>
<dbReference type="SUPFAM" id="SSF103575">
    <property type="entry name" value="Plexin repeat"/>
    <property type="match status" value="1"/>
</dbReference>
<dbReference type="SUPFAM" id="SSF56112">
    <property type="entry name" value="Protein kinase-like (PK-like)"/>
    <property type="match status" value="1"/>
</dbReference>
<dbReference type="SUPFAM" id="SSF101912">
    <property type="entry name" value="Sema domain"/>
    <property type="match status" value="1"/>
</dbReference>
<dbReference type="PROSITE" id="PS00107">
    <property type="entry name" value="PROTEIN_KINASE_ATP"/>
    <property type="match status" value="1"/>
</dbReference>
<dbReference type="PROSITE" id="PS50011">
    <property type="entry name" value="PROTEIN_KINASE_DOM"/>
    <property type="match status" value="1"/>
</dbReference>
<dbReference type="PROSITE" id="PS00109">
    <property type="entry name" value="PROTEIN_KINASE_TYR"/>
    <property type="match status" value="1"/>
</dbReference>
<dbReference type="PROSITE" id="PS51004">
    <property type="entry name" value="SEMA"/>
    <property type="match status" value="1"/>
</dbReference>
<reference key="1">
    <citation type="submission" date="2005-10" db="EMBL/GenBank/DDBJ databases">
        <title>NISC comparative sequencing initiative.</title>
        <authorList>
            <person name="Antonellis A."/>
            <person name="Ayele K."/>
            <person name="Benjamin B."/>
            <person name="Blakesley R.W."/>
            <person name="Boakye A."/>
            <person name="Bouffard G.G."/>
            <person name="Brinkley C."/>
            <person name="Brooks S."/>
            <person name="Chu G."/>
            <person name="Coleman H."/>
            <person name="Engle J."/>
            <person name="Gestole M."/>
            <person name="Greene A."/>
            <person name="Guan X."/>
            <person name="Gupta J."/>
            <person name="Haghighi P."/>
            <person name="Han J."/>
            <person name="Hansen N."/>
            <person name="Ho S.-L."/>
            <person name="Hu P."/>
            <person name="Hunter G."/>
            <person name="Hurle B."/>
            <person name="Idol J.R."/>
            <person name="Kwong P."/>
            <person name="Laric P."/>
            <person name="Larson S."/>
            <person name="Lee-Lin S.-Q."/>
            <person name="Legaspi R."/>
            <person name="Madden M."/>
            <person name="Maduro Q.L."/>
            <person name="Maduro V.B."/>
            <person name="Margulies E.H."/>
            <person name="Masiello C."/>
            <person name="Maskeri B."/>
            <person name="McDowell J."/>
            <person name="Mojidi H.A."/>
            <person name="Mullikin J.C."/>
            <person name="Oestreicher J.S."/>
            <person name="Park M."/>
            <person name="Portnoy M.E."/>
            <person name="Prasad A."/>
            <person name="Puri O."/>
            <person name="Reddix-Dugue N."/>
            <person name="Schandler K."/>
            <person name="Schueler M.G."/>
            <person name="Sison C."/>
            <person name="Stantripop S."/>
            <person name="Stephen E."/>
            <person name="Taye A."/>
            <person name="Thomas J.W."/>
            <person name="Thomas P.J."/>
            <person name="Tsipouri V."/>
            <person name="Ung L."/>
            <person name="Vogt J.L."/>
            <person name="Wetherby K.D."/>
            <person name="Young A."/>
            <person name="Green E.D."/>
        </authorList>
    </citation>
    <scope>NUCLEOTIDE SEQUENCE [LARGE SCALE GENOMIC DNA]</scope>
</reference>
<sequence>MKAPAVLAPGILVLLFTLVQRSNGECKEALTKSEMNVNMKYQLPNFTAETPIQNVILHEHHIFLGATNYIYVLNEEDLQKVAEYRTGPVLEHPDCFPCQDCSSKANLSGGVWKDNINMALVVDTYYDDQLISCGSVNRGTCQRHVFPHNHTADIQSEVHCIFSAQTEEPSQCPDCMVSALGTKVLLSVKDRFLNFFVGNTINSSYFPDHSLHSISVRRLKETKDGFMFLTDQSYVDVLPEFRDSYPIKYVHAFESNNFIYFLTVQRETLNAQTFHTRIIRFCSINSALHSYMEMPLECILTEKRKKRSTKKEVFNILQAAYVSKPGAQLARQIGASLNDDILFGVFAQSKPDSAEPMDRSAVCAFPIKYVNDFFNKIVNKNNVRCLQHFYGPNHEHCFNRTFQRNLLGCEARHDEYRTEFTTALQRIDLFAGQFNKVLLTSISTFIKGDLTIANLGTSEGRFIQIVVSRSVPSNPHVNFLLDSHPVSPEVIVEHPLNQNGYTLVVTGKKITKIPLNGLGCRHFQSCSQCLSAPSFVQCGWCHDKCVRSEECSSGTWTQETCLPTIYKVFPTSAPLEGGTRLTICGWDFGFRRNNKFDLKKTRVLLGNESCTLTLSESTMNTLKCTVGPAMNERFNMSIIISNAHGTTQYSTFSYVDPIITSISPRYGPMSGGTLLTLTGNYLNSGNSRHISIGGKTCTLKSVSNSILECYTPAQSISTEFPVKLKIDLANRETSIFSYREDPIVYEIYPTKSFVSGGSTITGIGKNLNSVSVPRMVINLHEAKRNFTVACQHRSNSEIICCTTPSLQQLNLQLPLKTKAFFMLDGILSKYFDLIYVHNPVFKPFEKPVMISIGNENVLEIKGNDIDPEAVKGEVLKVGNKSCENIHLHSEAVLCTVPGDLLKLNSELNIEWKQAISSTVLGKVIVQPDQNFTGLVAGVVSISIALLLLLGLFLWLKKKKQIKDLGSELVRYDARVHTPHLDRLVSARSVSPTTEMVSNESVDYRATFPEDQFPNSSQNGSCRQVQYPLTDMSPILTSGDSDISSPLLQNTVHIDLSALNPELVQAVQHVVIGPSSLIVHFNEVIGRGHFGCVYHGTLLDNDGKKIHCAVKSLNRITDIGEVSQFLTEGIIMKDFSHPNVLSLLGICLRSEGSPLVVLPYMKHGDLRNFIRNETHNPTVKDLIGFGLQVAKGMKYLASKKFVHRDLAARNCMLDEKFTVKVADFGLARDMYDKEYYSVHNKTGAKLPVKWMALESLQTQKFTTKSDVWSFGVLLWELMTRGAPPYPDVNTFDITVYLLQGRRLLQPEYCPDPLYEVMLKCWHPKAEMRPSFSELVSRISAIFSTFIGEHYVHVNATYVNVKCVAPYPSLLSSQDNTDGEVDT</sequence>
<keyword id="KW-0067">ATP-binding</keyword>
<keyword id="KW-1015">Disulfide bond</keyword>
<keyword id="KW-0325">Glycoprotein</keyword>
<keyword id="KW-0418">Kinase</keyword>
<keyword id="KW-0472">Membrane</keyword>
<keyword id="KW-0547">Nucleotide-binding</keyword>
<keyword id="KW-0597">Phosphoprotein</keyword>
<keyword id="KW-0656">Proto-oncogene</keyword>
<keyword id="KW-0675">Receptor</keyword>
<keyword id="KW-1185">Reference proteome</keyword>
<keyword id="KW-0677">Repeat</keyword>
<keyword id="KW-0732">Signal</keyword>
<keyword id="KW-0808">Transferase</keyword>
<keyword id="KW-0812">Transmembrane</keyword>
<keyword id="KW-1133">Transmembrane helix</keyword>
<keyword id="KW-0829">Tyrosine-protein kinase</keyword>
<keyword id="KW-0832">Ubl conjugation</keyword>